<organism>
    <name type="scientific">Streptococcus pyogenes serotype M12 (strain MGAS2096)</name>
    <dbReference type="NCBI Taxonomy" id="370553"/>
    <lineage>
        <taxon>Bacteria</taxon>
        <taxon>Bacillati</taxon>
        <taxon>Bacillota</taxon>
        <taxon>Bacilli</taxon>
        <taxon>Lactobacillales</taxon>
        <taxon>Streptococcaceae</taxon>
        <taxon>Streptococcus</taxon>
    </lineage>
</organism>
<keyword id="KW-0687">Ribonucleoprotein</keyword>
<keyword id="KW-0689">Ribosomal protein</keyword>
<keyword id="KW-0694">RNA-binding</keyword>
<keyword id="KW-0699">rRNA-binding</keyword>
<proteinExistence type="inferred from homology"/>
<evidence type="ECO:0000255" key="1">
    <source>
        <dbReference type="HAMAP-Rule" id="MF_01343"/>
    </source>
</evidence>
<evidence type="ECO:0000305" key="2"/>
<dbReference type="EMBL" id="CP000261">
    <property type="protein sequence ID" value="ABF36741.1"/>
    <property type="molecule type" value="Genomic_DNA"/>
</dbReference>
<dbReference type="SMR" id="Q1J9S0"/>
<dbReference type="KEGG" id="spj:MGAS2096_Spy1689"/>
<dbReference type="HOGENOM" id="CLU_148518_0_0_9"/>
<dbReference type="GO" id="GO:0022627">
    <property type="term" value="C:cytosolic small ribosomal subunit"/>
    <property type="evidence" value="ECO:0007669"/>
    <property type="project" value="TreeGrafter"/>
</dbReference>
<dbReference type="GO" id="GO:0019843">
    <property type="term" value="F:rRNA binding"/>
    <property type="evidence" value="ECO:0007669"/>
    <property type="project" value="UniProtKB-UniRule"/>
</dbReference>
<dbReference type="GO" id="GO:0003735">
    <property type="term" value="F:structural constituent of ribosome"/>
    <property type="evidence" value="ECO:0007669"/>
    <property type="project" value="InterPro"/>
</dbReference>
<dbReference type="GO" id="GO:0006412">
    <property type="term" value="P:translation"/>
    <property type="evidence" value="ECO:0007669"/>
    <property type="project" value="UniProtKB-UniRule"/>
</dbReference>
<dbReference type="CDD" id="cd00353">
    <property type="entry name" value="Ribosomal_S15p_S13e"/>
    <property type="match status" value="1"/>
</dbReference>
<dbReference type="FunFam" id="1.10.287.10:FF:000002">
    <property type="entry name" value="30S ribosomal protein S15"/>
    <property type="match status" value="1"/>
</dbReference>
<dbReference type="Gene3D" id="6.10.250.3130">
    <property type="match status" value="1"/>
</dbReference>
<dbReference type="Gene3D" id="1.10.287.10">
    <property type="entry name" value="S15/NS1, RNA-binding"/>
    <property type="match status" value="1"/>
</dbReference>
<dbReference type="HAMAP" id="MF_01343_B">
    <property type="entry name" value="Ribosomal_uS15_B"/>
    <property type="match status" value="1"/>
</dbReference>
<dbReference type="InterPro" id="IPR000589">
    <property type="entry name" value="Ribosomal_uS15"/>
</dbReference>
<dbReference type="InterPro" id="IPR005290">
    <property type="entry name" value="Ribosomal_uS15_bac-type"/>
</dbReference>
<dbReference type="InterPro" id="IPR009068">
    <property type="entry name" value="uS15_NS1_RNA-bd_sf"/>
</dbReference>
<dbReference type="NCBIfam" id="TIGR00952">
    <property type="entry name" value="S15_bact"/>
    <property type="match status" value="1"/>
</dbReference>
<dbReference type="PANTHER" id="PTHR23321">
    <property type="entry name" value="RIBOSOMAL PROTEIN S15, BACTERIAL AND ORGANELLAR"/>
    <property type="match status" value="1"/>
</dbReference>
<dbReference type="PANTHER" id="PTHR23321:SF26">
    <property type="entry name" value="SMALL RIBOSOMAL SUBUNIT PROTEIN US15M"/>
    <property type="match status" value="1"/>
</dbReference>
<dbReference type="Pfam" id="PF00312">
    <property type="entry name" value="Ribosomal_S15"/>
    <property type="match status" value="1"/>
</dbReference>
<dbReference type="SMART" id="SM01387">
    <property type="entry name" value="Ribosomal_S15"/>
    <property type="match status" value="1"/>
</dbReference>
<dbReference type="SUPFAM" id="SSF47060">
    <property type="entry name" value="S15/NS1 RNA-binding domain"/>
    <property type="match status" value="1"/>
</dbReference>
<dbReference type="PROSITE" id="PS00362">
    <property type="entry name" value="RIBOSOMAL_S15"/>
    <property type="match status" value="1"/>
</dbReference>
<protein>
    <recommendedName>
        <fullName evidence="1">Small ribosomal subunit protein uS15</fullName>
    </recommendedName>
    <alternativeName>
        <fullName evidence="2">30S ribosomal protein S15</fullName>
    </alternativeName>
</protein>
<feature type="chain" id="PRO_0000255536" description="Small ribosomal subunit protein uS15">
    <location>
        <begin position="1"/>
        <end position="89"/>
    </location>
</feature>
<accession>Q1J9S0</accession>
<name>RS15_STRPB</name>
<gene>
    <name evidence="1" type="primary">rpsO</name>
    <name type="ordered locus">MGAS2096_Spy1689</name>
</gene>
<comment type="function">
    <text evidence="1">One of the primary rRNA binding proteins, it binds directly to 16S rRNA where it helps nucleate assembly of the platform of the 30S subunit by binding and bridging several RNA helices of the 16S rRNA.</text>
</comment>
<comment type="function">
    <text evidence="1">Forms an intersubunit bridge (bridge B4) with the 23S rRNA of the 50S subunit in the ribosome.</text>
</comment>
<comment type="subunit">
    <text evidence="1">Part of the 30S ribosomal subunit. Forms a bridge to the 50S subunit in the 70S ribosome, contacting the 23S rRNA.</text>
</comment>
<comment type="similarity">
    <text evidence="1">Belongs to the universal ribosomal protein uS15 family.</text>
</comment>
<reference key="1">
    <citation type="journal article" date="2006" name="Proc. Natl. Acad. Sci. U.S.A.">
        <title>Molecular genetic anatomy of inter- and intraserotype variation in the human bacterial pathogen group A Streptococcus.</title>
        <authorList>
            <person name="Beres S.B."/>
            <person name="Richter E.W."/>
            <person name="Nagiec M.J."/>
            <person name="Sumby P."/>
            <person name="Porcella S.F."/>
            <person name="DeLeo F.R."/>
            <person name="Musser J.M."/>
        </authorList>
    </citation>
    <scope>NUCLEOTIDE SEQUENCE [LARGE SCALE GENOMIC DNA]</scope>
    <source>
        <strain>MGAS2096</strain>
    </source>
</reference>
<sequence length="89" mass="10504">MAISKEKKNEIIAQYARHEGDTGSVEVQVAVLTWEINHLNSHIKEHKKDHATYRGLMKKIGHRRNLLAYLRRTDVNRYRELIQSLGLRR</sequence>